<accession>P52250</accession>
<sequence>VDCSEYPQPACTTERRPVCGSNNKTYSNKCNFCNAVVKSNGTLTVSHFGKC</sequence>
<organism>
    <name type="scientific">Polyplectron napoleonis</name>
    <name type="common">Palawan peacock-pheasant</name>
    <name type="synonym">Polyplectron emphanum</name>
    <dbReference type="NCBI Taxonomy" id="30403"/>
    <lineage>
        <taxon>Eukaryota</taxon>
        <taxon>Metazoa</taxon>
        <taxon>Chordata</taxon>
        <taxon>Craniata</taxon>
        <taxon>Vertebrata</taxon>
        <taxon>Euteleostomi</taxon>
        <taxon>Archelosauria</taxon>
        <taxon>Archosauria</taxon>
        <taxon>Dinosauria</taxon>
        <taxon>Saurischia</taxon>
        <taxon>Theropoda</taxon>
        <taxon>Coelurosauria</taxon>
        <taxon>Aves</taxon>
        <taxon>Neognathae</taxon>
        <taxon>Galloanserae</taxon>
        <taxon>Galliformes</taxon>
        <taxon>Phasianidae</taxon>
        <taxon>Phasianinae</taxon>
        <taxon>Polyplectron</taxon>
    </lineage>
</organism>
<comment type="subcellular location">
    <subcellularLocation>
        <location>Secreted</location>
    </subcellularLocation>
</comment>
<comment type="domain">
    <text>Avian ovomucoid consists of three homologous, tandem Kazal family inhibitory domains.</text>
</comment>
<feature type="chain" id="PRO_0000073166" description="Ovomucoid">
    <location>
        <begin position="1" status="less than"/>
        <end position="51" status="greater than"/>
    </location>
</feature>
<feature type="domain" description="Kazal-like" evidence="1">
    <location>
        <begin position="1"/>
        <end position="49"/>
    </location>
</feature>
<feature type="site" description="Reactive bond 3">
    <location>
        <begin position="13"/>
        <end position="14"/>
    </location>
</feature>
<feature type="glycosylation site" description="N-linked (GlcNAc...) asparagine">
    <location>
        <position position="40"/>
    </location>
</feature>
<feature type="disulfide bond">
    <location>
        <begin position="3"/>
        <end position="33"/>
    </location>
</feature>
<feature type="disulfide bond">
    <location>
        <begin position="11"/>
        <end position="30"/>
    </location>
</feature>
<feature type="disulfide bond">
    <location>
        <begin position="19"/>
        <end position="51"/>
    </location>
</feature>
<feature type="non-terminal residue">
    <location>
        <position position="1"/>
    </location>
</feature>
<feature type="non-terminal residue">
    <location>
        <position position="51"/>
    </location>
</feature>
<proteinExistence type="evidence at protein level"/>
<keyword id="KW-0903">Direct protein sequencing</keyword>
<keyword id="KW-1015">Disulfide bond</keyword>
<keyword id="KW-0325">Glycoprotein</keyword>
<keyword id="KW-0646">Protease inhibitor</keyword>
<keyword id="KW-0677">Repeat</keyword>
<keyword id="KW-0964">Secreted</keyword>
<keyword id="KW-0722">Serine protease inhibitor</keyword>
<reference key="1">
    <citation type="journal article" date="1993" name="J. Protein Chem.">
        <title>Amino acid sequences of ovomucoid third domains from 27 additional species of birds.</title>
        <authorList>
            <person name="Apostol I."/>
            <person name="Giletto A."/>
            <person name="Komiyama T."/>
            <person name="Zhang W."/>
            <person name="Laskowski M. Jr."/>
        </authorList>
    </citation>
    <scope>PROTEIN SEQUENCE</scope>
</reference>
<name>IOVO_POLNP</name>
<dbReference type="PIR" id="G61588">
    <property type="entry name" value="G61588"/>
</dbReference>
<dbReference type="SMR" id="P52250"/>
<dbReference type="GO" id="GO:0005615">
    <property type="term" value="C:extracellular space"/>
    <property type="evidence" value="ECO:0007669"/>
    <property type="project" value="UniProtKB-ARBA"/>
</dbReference>
<dbReference type="GO" id="GO:0004867">
    <property type="term" value="F:serine-type endopeptidase inhibitor activity"/>
    <property type="evidence" value="ECO:0007669"/>
    <property type="project" value="UniProtKB-KW"/>
</dbReference>
<dbReference type="CDD" id="cd00104">
    <property type="entry name" value="KAZAL_FS"/>
    <property type="match status" value="1"/>
</dbReference>
<dbReference type="FunFam" id="3.30.60.30:FF:000037">
    <property type="entry name" value="Ovomucoid"/>
    <property type="match status" value="1"/>
</dbReference>
<dbReference type="Gene3D" id="3.30.60.30">
    <property type="match status" value="1"/>
</dbReference>
<dbReference type="InterPro" id="IPR051597">
    <property type="entry name" value="Bifunctional_prot_inhibitor"/>
</dbReference>
<dbReference type="InterPro" id="IPR002350">
    <property type="entry name" value="Kazal_dom"/>
</dbReference>
<dbReference type="InterPro" id="IPR036058">
    <property type="entry name" value="Kazal_dom_sf"/>
</dbReference>
<dbReference type="PANTHER" id="PTHR47729:SF1">
    <property type="entry name" value="OVOMUCOID-LIKE-RELATED"/>
    <property type="match status" value="1"/>
</dbReference>
<dbReference type="PANTHER" id="PTHR47729">
    <property type="entry name" value="SERINE PEPTIDASE INHIBITOR, KAZAL TYPE 2, TANDEM DUPLICATE 1-RELATED"/>
    <property type="match status" value="1"/>
</dbReference>
<dbReference type="Pfam" id="PF00050">
    <property type="entry name" value="Kazal_1"/>
    <property type="match status" value="1"/>
</dbReference>
<dbReference type="SMART" id="SM00280">
    <property type="entry name" value="KAZAL"/>
    <property type="match status" value="1"/>
</dbReference>
<dbReference type="SUPFAM" id="SSF100895">
    <property type="entry name" value="Kazal-type serine protease inhibitors"/>
    <property type="match status" value="1"/>
</dbReference>
<dbReference type="PROSITE" id="PS00282">
    <property type="entry name" value="KAZAL_1"/>
    <property type="match status" value="1"/>
</dbReference>
<dbReference type="PROSITE" id="PS51465">
    <property type="entry name" value="KAZAL_2"/>
    <property type="match status" value="1"/>
</dbReference>
<evidence type="ECO:0000255" key="1">
    <source>
        <dbReference type="PROSITE-ProRule" id="PRU00798"/>
    </source>
</evidence>
<protein>
    <recommendedName>
        <fullName>Ovomucoid</fullName>
    </recommendedName>
</protein>